<protein>
    <recommendedName>
        <fullName>DNA replication and repair protein RecF</fullName>
    </recommendedName>
</protein>
<dbReference type="EMBL" id="M58352">
    <property type="protein sequence ID" value="AAA83960.1"/>
    <property type="molecule type" value="Genomic_DNA"/>
</dbReference>
<dbReference type="PIR" id="JQ0735">
    <property type="entry name" value="JQ0735"/>
</dbReference>
<dbReference type="RefSeq" id="WP_004246505.1">
    <property type="nucleotide sequence ID" value="NZ_WNBD01000004.1"/>
</dbReference>
<dbReference type="SMR" id="P22839"/>
<dbReference type="STRING" id="584.AOUC001_18985"/>
<dbReference type="GeneID" id="6801268"/>
<dbReference type="OMA" id="GESWSYA"/>
<dbReference type="OrthoDB" id="9803889at2"/>
<dbReference type="GO" id="GO:0005737">
    <property type="term" value="C:cytoplasm"/>
    <property type="evidence" value="ECO:0007669"/>
    <property type="project" value="UniProtKB-SubCell"/>
</dbReference>
<dbReference type="GO" id="GO:0005524">
    <property type="term" value="F:ATP binding"/>
    <property type="evidence" value="ECO:0007669"/>
    <property type="project" value="UniProtKB-UniRule"/>
</dbReference>
<dbReference type="GO" id="GO:0003697">
    <property type="term" value="F:single-stranded DNA binding"/>
    <property type="evidence" value="ECO:0007669"/>
    <property type="project" value="UniProtKB-UniRule"/>
</dbReference>
<dbReference type="GO" id="GO:0006260">
    <property type="term" value="P:DNA replication"/>
    <property type="evidence" value="ECO:0007669"/>
    <property type="project" value="UniProtKB-UniRule"/>
</dbReference>
<dbReference type="GO" id="GO:0000731">
    <property type="term" value="P:DNA synthesis involved in DNA repair"/>
    <property type="evidence" value="ECO:0007669"/>
    <property type="project" value="TreeGrafter"/>
</dbReference>
<dbReference type="GO" id="GO:0006302">
    <property type="term" value="P:double-strand break repair"/>
    <property type="evidence" value="ECO:0007669"/>
    <property type="project" value="TreeGrafter"/>
</dbReference>
<dbReference type="GO" id="GO:0009432">
    <property type="term" value="P:SOS response"/>
    <property type="evidence" value="ECO:0007669"/>
    <property type="project" value="UniProtKB-UniRule"/>
</dbReference>
<dbReference type="FunFam" id="1.20.1050.90:FF:000001">
    <property type="entry name" value="DNA replication and repair protein RecF"/>
    <property type="match status" value="1"/>
</dbReference>
<dbReference type="Gene3D" id="3.40.50.300">
    <property type="entry name" value="P-loop containing nucleotide triphosphate hydrolases"/>
    <property type="match status" value="1"/>
</dbReference>
<dbReference type="Gene3D" id="1.20.1050.90">
    <property type="entry name" value="RecF/RecN/SMC, N-terminal domain"/>
    <property type="match status" value="1"/>
</dbReference>
<dbReference type="HAMAP" id="MF_00365">
    <property type="entry name" value="RecF"/>
    <property type="match status" value="1"/>
</dbReference>
<dbReference type="InterPro" id="IPR001238">
    <property type="entry name" value="DNA-binding_RecF"/>
</dbReference>
<dbReference type="InterPro" id="IPR018078">
    <property type="entry name" value="DNA-binding_RecF_CS"/>
</dbReference>
<dbReference type="InterPro" id="IPR027417">
    <property type="entry name" value="P-loop_NTPase"/>
</dbReference>
<dbReference type="InterPro" id="IPR003395">
    <property type="entry name" value="RecF/RecN/SMC_N"/>
</dbReference>
<dbReference type="InterPro" id="IPR042174">
    <property type="entry name" value="RecF_2"/>
</dbReference>
<dbReference type="NCBIfam" id="TIGR00611">
    <property type="entry name" value="recf"/>
    <property type="match status" value="1"/>
</dbReference>
<dbReference type="PANTHER" id="PTHR32182">
    <property type="entry name" value="DNA REPLICATION AND REPAIR PROTEIN RECF"/>
    <property type="match status" value="1"/>
</dbReference>
<dbReference type="PANTHER" id="PTHR32182:SF0">
    <property type="entry name" value="DNA REPLICATION AND REPAIR PROTEIN RECF"/>
    <property type="match status" value="1"/>
</dbReference>
<dbReference type="Pfam" id="PF02463">
    <property type="entry name" value="SMC_N"/>
    <property type="match status" value="1"/>
</dbReference>
<dbReference type="SUPFAM" id="SSF52540">
    <property type="entry name" value="P-loop containing nucleoside triphosphate hydrolases"/>
    <property type="match status" value="1"/>
</dbReference>
<dbReference type="PROSITE" id="PS00617">
    <property type="entry name" value="RECF_1"/>
    <property type="match status" value="1"/>
</dbReference>
<dbReference type="PROSITE" id="PS00618">
    <property type="entry name" value="RECF_2"/>
    <property type="match status" value="1"/>
</dbReference>
<comment type="function">
    <text evidence="1">The RecF protein is involved in DNA metabolism; it is required for DNA replication and normal SOS inducibility. RecF binds preferentially to single-stranded, linear DNA. It also seems to bind ATP (By similarity).</text>
</comment>
<comment type="subcellular location">
    <subcellularLocation>
        <location evidence="1">Cytoplasm</location>
    </subcellularLocation>
</comment>
<comment type="similarity">
    <text evidence="3">Belongs to the RecF family.</text>
</comment>
<proteinExistence type="inferred from homology"/>
<reference key="1">
    <citation type="journal article" date="1990" name="Gene">
        <title>Nucleotide sequence of a Proteus mirabilis DNA fragment homologous to the 60K-rnpA-rpmH-dnaA-dnaN-recF-gyrB region of Escherichia coli.</title>
        <authorList>
            <person name="Skovgaard O."/>
        </authorList>
    </citation>
    <scope>NUCLEOTIDE SEQUENCE [GENOMIC DNA]</scope>
    <source>
        <strain>LM1509</strain>
    </source>
</reference>
<name>RECF_PROMI</name>
<keyword id="KW-0067">ATP-binding</keyword>
<keyword id="KW-0963">Cytoplasm</keyword>
<keyword id="KW-0227">DNA damage</keyword>
<keyword id="KW-0234">DNA repair</keyword>
<keyword id="KW-0235">DNA replication</keyword>
<keyword id="KW-0238">DNA-binding</keyword>
<keyword id="KW-0547">Nucleotide-binding</keyword>
<keyword id="KW-0742">SOS response</keyword>
<organism>
    <name type="scientific">Proteus mirabilis</name>
    <dbReference type="NCBI Taxonomy" id="584"/>
    <lineage>
        <taxon>Bacteria</taxon>
        <taxon>Pseudomonadati</taxon>
        <taxon>Pseudomonadota</taxon>
        <taxon>Gammaproteobacteria</taxon>
        <taxon>Enterobacterales</taxon>
        <taxon>Morganellaceae</taxon>
        <taxon>Proteus</taxon>
    </lineage>
</organism>
<sequence>MILSRLLIRHFRNIEQADLPLADGFNFLVGPNGSGKTSILEAIYTLGHGRAFRSAQANRVIQHDENAFILHGRLSGLDEESRGYSIGLSKDREGNSTVRIDGSDGHKIAELAKLLPMQLITPEGFTLLNGGPKYRRAFIDWGCFHNEPRFFAAWSDLKRVLKQRNAALRQASSYRQLLPWDKELILLTEQISQWRAEYTEDIAKDIEETCQLFLPEFTLKVSFQRGWDKETDYAQLLERQFERDKVLSYTSLGAHKADLRIRANGTPVEDMLSRGQLKLLMCALRLAQGEYFTRKNGQRCLYLLDDFASELDANRRQLLAERLKSTQAQVFVSAITSGQVKDMLDVNSRLFSVEHGKIEVKP</sequence>
<accession>P22839</accession>
<feature type="chain" id="PRO_0000196441" description="DNA replication and repair protein RecF">
    <location>
        <begin position="1"/>
        <end position="362"/>
    </location>
</feature>
<feature type="binding site" evidence="2">
    <location>
        <begin position="30"/>
        <end position="37"/>
    </location>
    <ligand>
        <name>ATP</name>
        <dbReference type="ChEBI" id="CHEBI:30616"/>
    </ligand>
</feature>
<gene>
    <name type="primary">recF</name>
</gene>
<evidence type="ECO:0000250" key="1"/>
<evidence type="ECO:0000255" key="2"/>
<evidence type="ECO:0000305" key="3"/>